<accession>P07079</accession>
<organism>
    <name type="scientific">Enterobacteria phage T4</name>
    <name type="common">Bacteriophage T4</name>
    <dbReference type="NCBI Taxonomy" id="10665"/>
    <lineage>
        <taxon>Viruses</taxon>
        <taxon>Duplodnaviria</taxon>
        <taxon>Heunggongvirae</taxon>
        <taxon>Uroviricota</taxon>
        <taxon>Caudoviricetes</taxon>
        <taxon>Straboviridae</taxon>
        <taxon>Tevenvirinae</taxon>
        <taxon>Tequatrovirus</taxon>
    </lineage>
</organism>
<feature type="chain" id="PRO_0000165108" description="Uncharacterized 11.8 kDa protein in Gp55-nrdG intergenic region">
    <location>
        <begin position="1"/>
        <end position="97"/>
    </location>
</feature>
<reference key="1">
    <citation type="journal article" date="1987" name="Nucleic Acids Res.">
        <title>Nucleotide sequence and primary structures of gene products coded for by the T4 genome between map positions 48.266 kb and 39.166 kb.</title>
        <authorList>
            <person name="Tomaschewski J."/>
            <person name="Rueger W."/>
        </authorList>
    </citation>
    <scope>NUCLEOTIDE SEQUENCE [GENOMIC DNA]</scope>
    <source>
        <strain>C</strain>
    </source>
</reference>
<reference key="2">
    <citation type="journal article" date="2003" name="Microbiol. Mol. Biol. Rev.">
        <title>Bacteriophage T4 genome.</title>
        <authorList>
            <person name="Miller E.S."/>
            <person name="Kutter E."/>
            <person name="Mosig G."/>
            <person name="Arisaka F."/>
            <person name="Kunisawa T."/>
            <person name="Ruger W."/>
        </authorList>
    </citation>
    <scope>NUCLEOTIDE SEQUENCE [LARGE SCALE GENOMIC DNA]</scope>
</reference>
<dbReference type="EMBL" id="Y00122">
    <property type="protein sequence ID" value="CAA68316.1"/>
    <property type="molecule type" value="Genomic_DNA"/>
</dbReference>
<dbReference type="EMBL" id="AF158101">
    <property type="protein sequence ID" value="AAD42496.1"/>
    <property type="molecule type" value="Genomic_DNA"/>
</dbReference>
<dbReference type="PIR" id="B30292">
    <property type="entry name" value="ZCBPT9"/>
</dbReference>
<dbReference type="RefSeq" id="NP_049684.1">
    <property type="nucleotide sequence ID" value="NC_000866.4"/>
</dbReference>
<dbReference type="SMR" id="P07079"/>
<dbReference type="GeneID" id="1258583"/>
<dbReference type="KEGG" id="vg:1258583"/>
<dbReference type="OrthoDB" id="17176at10239"/>
<dbReference type="Proteomes" id="UP000009087">
    <property type="component" value="Segment"/>
</dbReference>
<dbReference type="InterPro" id="IPR035133">
    <property type="entry name" value="DUF5499"/>
</dbReference>
<dbReference type="Pfam" id="PF17603">
    <property type="entry name" value="DUF5499"/>
    <property type="match status" value="1"/>
</dbReference>
<organismHost>
    <name type="scientific">Escherichia coli</name>
    <dbReference type="NCBI Taxonomy" id="562"/>
</organismHost>
<proteinExistence type="predicted"/>
<gene>
    <name type="primary">y04E</name>
    <name type="synonym">55.5</name>
</gene>
<sequence>MGKTYRRKDLKVRDYDYFGKRKAPDGVSHKDMVENIFRSDKWRRMKGIDSEVKDELNRQLRGEVRKLKKSVYIDDDFDYNTSQRVAKRKSNECYRYS</sequence>
<protein>
    <recommendedName>
        <fullName>Uncharacterized 11.8 kDa protein in Gp55-nrdG intergenic region</fullName>
    </recommendedName>
</protein>
<keyword id="KW-1185">Reference proteome</keyword>
<name>Y04E_BPT4</name>